<keyword id="KW-0143">Chaperone</keyword>
<keyword id="KW-0963">Cytoplasm</keyword>
<keyword id="KW-0235">DNA replication</keyword>
<keyword id="KW-0479">Metal-binding</keyword>
<keyword id="KW-0677">Repeat</keyword>
<keyword id="KW-0346">Stress response</keyword>
<keyword id="KW-0862">Zinc</keyword>
<keyword id="KW-0863">Zinc-finger</keyword>
<dbReference type="EMBL" id="AB070346">
    <property type="protein sequence ID" value="BAB63291.1"/>
    <property type="molecule type" value="Genomic_DNA"/>
</dbReference>
<dbReference type="SMR" id="Q93R26"/>
<dbReference type="GO" id="GO:0005737">
    <property type="term" value="C:cytoplasm"/>
    <property type="evidence" value="ECO:0007669"/>
    <property type="project" value="UniProtKB-SubCell"/>
</dbReference>
<dbReference type="GO" id="GO:0005524">
    <property type="term" value="F:ATP binding"/>
    <property type="evidence" value="ECO:0007669"/>
    <property type="project" value="InterPro"/>
</dbReference>
<dbReference type="GO" id="GO:0031072">
    <property type="term" value="F:heat shock protein binding"/>
    <property type="evidence" value="ECO:0007669"/>
    <property type="project" value="InterPro"/>
</dbReference>
<dbReference type="GO" id="GO:0051082">
    <property type="term" value="F:unfolded protein binding"/>
    <property type="evidence" value="ECO:0007669"/>
    <property type="project" value="UniProtKB-UniRule"/>
</dbReference>
<dbReference type="GO" id="GO:0008270">
    <property type="term" value="F:zinc ion binding"/>
    <property type="evidence" value="ECO:0007669"/>
    <property type="project" value="UniProtKB-UniRule"/>
</dbReference>
<dbReference type="GO" id="GO:0051085">
    <property type="term" value="P:chaperone cofactor-dependent protein refolding"/>
    <property type="evidence" value="ECO:0007669"/>
    <property type="project" value="TreeGrafter"/>
</dbReference>
<dbReference type="GO" id="GO:0006260">
    <property type="term" value="P:DNA replication"/>
    <property type="evidence" value="ECO:0007669"/>
    <property type="project" value="UniProtKB-KW"/>
</dbReference>
<dbReference type="GO" id="GO:0042026">
    <property type="term" value="P:protein refolding"/>
    <property type="evidence" value="ECO:0007669"/>
    <property type="project" value="TreeGrafter"/>
</dbReference>
<dbReference type="GO" id="GO:0009408">
    <property type="term" value="P:response to heat"/>
    <property type="evidence" value="ECO:0007669"/>
    <property type="project" value="InterPro"/>
</dbReference>
<dbReference type="CDD" id="cd06257">
    <property type="entry name" value="DnaJ"/>
    <property type="match status" value="1"/>
</dbReference>
<dbReference type="CDD" id="cd10747">
    <property type="entry name" value="DnaJ_C"/>
    <property type="match status" value="1"/>
</dbReference>
<dbReference type="CDD" id="cd10719">
    <property type="entry name" value="DnaJ_zf"/>
    <property type="match status" value="1"/>
</dbReference>
<dbReference type="FunFam" id="1.10.287.110:FF:000031">
    <property type="entry name" value="Molecular chaperone DnaJ"/>
    <property type="match status" value="1"/>
</dbReference>
<dbReference type="FunFam" id="2.10.230.10:FF:000002">
    <property type="entry name" value="Molecular chaperone DnaJ"/>
    <property type="match status" value="1"/>
</dbReference>
<dbReference type="FunFam" id="2.60.260.20:FF:000004">
    <property type="entry name" value="Molecular chaperone DnaJ"/>
    <property type="match status" value="1"/>
</dbReference>
<dbReference type="Gene3D" id="1.10.287.110">
    <property type="entry name" value="DnaJ domain"/>
    <property type="match status" value="1"/>
</dbReference>
<dbReference type="Gene3D" id="2.10.230.10">
    <property type="entry name" value="Heat shock protein DnaJ, cysteine-rich domain"/>
    <property type="match status" value="1"/>
</dbReference>
<dbReference type="Gene3D" id="2.60.260.20">
    <property type="entry name" value="Urease metallochaperone UreE, N-terminal domain"/>
    <property type="match status" value="2"/>
</dbReference>
<dbReference type="HAMAP" id="MF_01152">
    <property type="entry name" value="DnaJ"/>
    <property type="match status" value="1"/>
</dbReference>
<dbReference type="InterPro" id="IPR012724">
    <property type="entry name" value="DnaJ"/>
</dbReference>
<dbReference type="InterPro" id="IPR002939">
    <property type="entry name" value="DnaJ_C"/>
</dbReference>
<dbReference type="InterPro" id="IPR001623">
    <property type="entry name" value="DnaJ_domain"/>
</dbReference>
<dbReference type="InterPro" id="IPR008971">
    <property type="entry name" value="HSP40/DnaJ_pept-bd"/>
</dbReference>
<dbReference type="InterPro" id="IPR001305">
    <property type="entry name" value="HSP_DnaJ_Cys-rich_dom"/>
</dbReference>
<dbReference type="InterPro" id="IPR036410">
    <property type="entry name" value="HSP_DnaJ_Cys-rich_dom_sf"/>
</dbReference>
<dbReference type="InterPro" id="IPR036869">
    <property type="entry name" value="J_dom_sf"/>
</dbReference>
<dbReference type="NCBIfam" id="TIGR02349">
    <property type="entry name" value="DnaJ_bact"/>
    <property type="match status" value="1"/>
</dbReference>
<dbReference type="NCBIfam" id="NF008035">
    <property type="entry name" value="PRK10767.1"/>
    <property type="match status" value="1"/>
</dbReference>
<dbReference type="NCBIfam" id="NF010869">
    <property type="entry name" value="PRK14276.1"/>
    <property type="match status" value="1"/>
</dbReference>
<dbReference type="NCBIfam" id="NF010873">
    <property type="entry name" value="PRK14280.1"/>
    <property type="match status" value="1"/>
</dbReference>
<dbReference type="PANTHER" id="PTHR43096:SF48">
    <property type="entry name" value="CHAPERONE PROTEIN DNAJ"/>
    <property type="match status" value="1"/>
</dbReference>
<dbReference type="PANTHER" id="PTHR43096">
    <property type="entry name" value="DNAJ HOMOLOG 1, MITOCHONDRIAL-RELATED"/>
    <property type="match status" value="1"/>
</dbReference>
<dbReference type="Pfam" id="PF00226">
    <property type="entry name" value="DnaJ"/>
    <property type="match status" value="1"/>
</dbReference>
<dbReference type="Pfam" id="PF01556">
    <property type="entry name" value="DnaJ_C"/>
    <property type="match status" value="1"/>
</dbReference>
<dbReference type="Pfam" id="PF00684">
    <property type="entry name" value="DnaJ_CXXCXGXG"/>
    <property type="match status" value="1"/>
</dbReference>
<dbReference type="PRINTS" id="PR00625">
    <property type="entry name" value="JDOMAIN"/>
</dbReference>
<dbReference type="SMART" id="SM00271">
    <property type="entry name" value="DnaJ"/>
    <property type="match status" value="1"/>
</dbReference>
<dbReference type="SUPFAM" id="SSF46565">
    <property type="entry name" value="Chaperone J-domain"/>
    <property type="match status" value="1"/>
</dbReference>
<dbReference type="SUPFAM" id="SSF57938">
    <property type="entry name" value="DnaJ/Hsp40 cysteine-rich domain"/>
    <property type="match status" value="1"/>
</dbReference>
<dbReference type="SUPFAM" id="SSF49493">
    <property type="entry name" value="HSP40/DnaJ peptide-binding domain"/>
    <property type="match status" value="2"/>
</dbReference>
<dbReference type="PROSITE" id="PS50076">
    <property type="entry name" value="DNAJ_2"/>
    <property type="match status" value="1"/>
</dbReference>
<dbReference type="PROSITE" id="PS51188">
    <property type="entry name" value="ZF_CR"/>
    <property type="match status" value="1"/>
</dbReference>
<protein>
    <recommendedName>
        <fullName evidence="1">Chaperone protein DnaJ</fullName>
    </recommendedName>
</protein>
<evidence type="ECO:0000255" key="1">
    <source>
        <dbReference type="HAMAP-Rule" id="MF_01152"/>
    </source>
</evidence>
<evidence type="ECO:0000256" key="2">
    <source>
        <dbReference type="SAM" id="MobiDB-lite"/>
    </source>
</evidence>
<gene>
    <name evidence="1" type="primary">dnaJ</name>
</gene>
<organism>
    <name type="scientific">Tetragenococcus halophilus</name>
    <name type="common">Pediococcus halophilus</name>
    <dbReference type="NCBI Taxonomy" id="51669"/>
    <lineage>
        <taxon>Bacteria</taxon>
        <taxon>Bacillati</taxon>
        <taxon>Bacillota</taxon>
        <taxon>Bacilli</taxon>
        <taxon>Lactobacillales</taxon>
        <taxon>Enterococcaceae</taxon>
        <taxon>Tetragenococcus</taxon>
    </lineage>
</organism>
<sequence>MATKRDYYEVLGVDKGASDDEIKKAYRKLSKKYHPDVNQEADAEEKFKKFQKPMNTLSDPQKRAAYDQYGHAGADANFGGGGAGGFGGFGGGFSDAGGFGGFEDIFESFFGGGRSADPNAPRQGDDLQYSINLTFEEAVFGKDTEVSYKRNEVCHTCGGNGAKPGTQPETCHKCKGSGTINAERQTPLGRVMTRQTCDVCHGTGKEIKEVCETCHGTGHEKKTHSVNVSVPAGVEDGQQMRLANQGEAGTNGGPYGDLYVVLYCSHETCNIFDRDGSEIYYELPINFVQAALGDEVDVPTVHGNVKLKIPAGTQTSTKFRLRGKGAPRLRGNSTGDQQVTVKIITPKNLNEEQREALRNFAELTGQSTEEQQSEGFFDKMKDAFKK</sequence>
<proteinExistence type="inferred from homology"/>
<feature type="chain" id="PRO_0000070918" description="Chaperone protein DnaJ">
    <location>
        <begin position="1"/>
        <end position="386"/>
    </location>
</feature>
<feature type="domain" description="J" evidence="1">
    <location>
        <begin position="6"/>
        <end position="70"/>
    </location>
</feature>
<feature type="repeat" description="CXXCXGXG motif">
    <location>
        <begin position="154"/>
        <end position="161"/>
    </location>
</feature>
<feature type="repeat" description="CXXCXGXG motif">
    <location>
        <begin position="171"/>
        <end position="178"/>
    </location>
</feature>
<feature type="repeat" description="CXXCXGXG motif">
    <location>
        <begin position="197"/>
        <end position="204"/>
    </location>
</feature>
<feature type="repeat" description="CXXCXGXG motif">
    <location>
        <begin position="211"/>
        <end position="218"/>
    </location>
</feature>
<feature type="zinc finger region" description="CR-type" evidence="1">
    <location>
        <begin position="141"/>
        <end position="223"/>
    </location>
</feature>
<feature type="region of interest" description="Disordered" evidence="2">
    <location>
        <begin position="363"/>
        <end position="386"/>
    </location>
</feature>
<feature type="compositionally biased region" description="Polar residues" evidence="2">
    <location>
        <begin position="364"/>
        <end position="374"/>
    </location>
</feature>
<feature type="compositionally biased region" description="Basic and acidic residues" evidence="2">
    <location>
        <begin position="376"/>
        <end position="386"/>
    </location>
</feature>
<feature type="binding site" evidence="1">
    <location>
        <position position="154"/>
    </location>
    <ligand>
        <name>Zn(2+)</name>
        <dbReference type="ChEBI" id="CHEBI:29105"/>
        <label>1</label>
    </ligand>
</feature>
<feature type="binding site" evidence="1">
    <location>
        <position position="157"/>
    </location>
    <ligand>
        <name>Zn(2+)</name>
        <dbReference type="ChEBI" id="CHEBI:29105"/>
        <label>1</label>
    </ligand>
</feature>
<feature type="binding site" evidence="1">
    <location>
        <position position="171"/>
    </location>
    <ligand>
        <name>Zn(2+)</name>
        <dbReference type="ChEBI" id="CHEBI:29105"/>
        <label>2</label>
    </ligand>
</feature>
<feature type="binding site" evidence="1">
    <location>
        <position position="174"/>
    </location>
    <ligand>
        <name>Zn(2+)</name>
        <dbReference type="ChEBI" id="CHEBI:29105"/>
        <label>2</label>
    </ligand>
</feature>
<feature type="binding site" evidence="1">
    <location>
        <position position="197"/>
    </location>
    <ligand>
        <name>Zn(2+)</name>
        <dbReference type="ChEBI" id="CHEBI:29105"/>
        <label>2</label>
    </ligand>
</feature>
<feature type="binding site" evidence="1">
    <location>
        <position position="200"/>
    </location>
    <ligand>
        <name>Zn(2+)</name>
        <dbReference type="ChEBI" id="CHEBI:29105"/>
        <label>2</label>
    </ligand>
</feature>
<feature type="binding site" evidence="1">
    <location>
        <position position="211"/>
    </location>
    <ligand>
        <name>Zn(2+)</name>
        <dbReference type="ChEBI" id="CHEBI:29105"/>
        <label>1</label>
    </ligand>
</feature>
<feature type="binding site" evidence="1">
    <location>
        <position position="214"/>
    </location>
    <ligand>
        <name>Zn(2+)</name>
        <dbReference type="ChEBI" id="CHEBI:29105"/>
        <label>1</label>
    </ligand>
</feature>
<reference key="1">
    <citation type="journal article" date="2002" name="J. Biosci. Bioeng.">
        <title>Molecular characterization and regulatory analysis of dnaK operon of halophilic lactic acid bacterium Tetragenococcus halophila.</title>
        <authorList>
            <person name="Fukuda D."/>
            <person name="Watanabe M."/>
            <person name="Sonezaki S."/>
            <person name="Sugimoto S."/>
            <person name="Sonomoto K."/>
            <person name="Ishizaki A."/>
        </authorList>
    </citation>
    <scope>NUCLEOTIDE SEQUENCE [GENOMIC DNA]</scope>
</reference>
<accession>Q93R26</accession>
<comment type="function">
    <text evidence="1">Participates actively in the response to hyperosmotic and heat shock by preventing the aggregation of stress-denatured proteins and by disaggregating proteins, also in an autonomous, DnaK-independent fashion. Unfolded proteins bind initially to DnaJ; upon interaction with the DnaJ-bound protein, DnaK hydrolyzes its bound ATP, resulting in the formation of a stable complex. GrpE releases ADP from DnaK; ATP binding to DnaK triggers the release of the substrate protein, thus completing the reaction cycle. Several rounds of ATP-dependent interactions between DnaJ, DnaK and GrpE are required for fully efficient folding. Also involved, together with DnaK and GrpE, in the DNA replication of plasmids through activation of initiation proteins.</text>
</comment>
<comment type="cofactor">
    <cofactor evidence="1">
        <name>Zn(2+)</name>
        <dbReference type="ChEBI" id="CHEBI:29105"/>
    </cofactor>
    <text evidence="1">Binds 2 Zn(2+) ions per monomer.</text>
</comment>
<comment type="subunit">
    <text evidence="1">Homodimer.</text>
</comment>
<comment type="subcellular location">
    <subcellularLocation>
        <location evidence="1">Cytoplasm</location>
    </subcellularLocation>
</comment>
<comment type="domain">
    <text evidence="1">The J domain is necessary and sufficient to stimulate DnaK ATPase activity. Zinc center 1 plays an important role in the autonomous, DnaK-independent chaperone activity of DnaJ. Zinc center 2 is essential for interaction with DnaK and for DnaJ activity.</text>
</comment>
<comment type="similarity">
    <text evidence="1">Belongs to the DnaJ family.</text>
</comment>
<name>DNAJ_TETHA</name>